<organism>
    <name type="scientific">Salmo salar</name>
    <name type="common">Atlantic salmon</name>
    <dbReference type="NCBI Taxonomy" id="8030"/>
    <lineage>
        <taxon>Eukaryota</taxon>
        <taxon>Metazoa</taxon>
        <taxon>Chordata</taxon>
        <taxon>Craniata</taxon>
        <taxon>Vertebrata</taxon>
        <taxon>Euteleostomi</taxon>
        <taxon>Actinopterygii</taxon>
        <taxon>Neopterygii</taxon>
        <taxon>Teleostei</taxon>
        <taxon>Protacanthopterygii</taxon>
        <taxon>Salmoniformes</taxon>
        <taxon>Salmonidae</taxon>
        <taxon>Salmoninae</taxon>
        <taxon>Salmo</taxon>
    </lineage>
</organism>
<keyword id="KW-0238">DNA-binding</keyword>
<keyword id="KW-0479">Metal-binding</keyword>
<keyword id="KW-0539">Nucleus</keyword>
<keyword id="KW-1185">Reference proteome</keyword>
<keyword id="KW-0678">Repressor</keyword>
<keyword id="KW-0804">Transcription</keyword>
<keyword id="KW-0805">Transcription regulation</keyword>
<keyword id="KW-0862">Zinc</keyword>
<keyword id="KW-0863">Zinc-finger</keyword>
<reference key="1">
    <citation type="journal article" date="2010" name="BMC Genomics">
        <title>Salmo salar and Esox lucius full-length cDNA sequences reveal changes in evolutionary pressures on a post-tetraploidization genome.</title>
        <authorList>
            <person name="Leong J.S."/>
            <person name="Jantzen S.G."/>
            <person name="von Schalburg K.R."/>
            <person name="Cooper G.A."/>
            <person name="Messmer A.M."/>
            <person name="Liao N.Y."/>
            <person name="Munro S."/>
            <person name="Moore R."/>
            <person name="Holt R.A."/>
            <person name="Jones S.J."/>
            <person name="Davidson W.S."/>
            <person name="Koop B.F."/>
        </authorList>
    </citation>
    <scope>NUCLEOTIDE SEQUENCE [LARGE SCALE MRNA]</scope>
    <source>
        <tissue>Brain</tissue>
    </source>
</reference>
<proteinExistence type="evidence at transcript level"/>
<accession>C0HAV3</accession>
<feature type="chain" id="PRO_0000385194" description="Zinc finger CCCH-type with G patch domain-containing protein">
    <location>
        <begin position="1"/>
        <end position="527"/>
    </location>
</feature>
<feature type="domain" description="G-patch" evidence="2">
    <location>
        <begin position="317"/>
        <end position="363"/>
    </location>
</feature>
<feature type="zinc finger region" description="C3H1-type" evidence="3">
    <location>
        <begin position="173"/>
        <end position="200"/>
    </location>
</feature>
<feature type="region of interest" description="Disordered" evidence="4">
    <location>
        <begin position="97"/>
        <end position="126"/>
    </location>
</feature>
<feature type="region of interest" description="Disordered" evidence="4">
    <location>
        <begin position="268"/>
        <end position="312"/>
    </location>
</feature>
<feature type="region of interest" description="Disordered" evidence="4">
    <location>
        <begin position="369"/>
        <end position="396"/>
    </location>
</feature>
<feature type="region of interest" description="Disordered" evidence="4">
    <location>
        <begin position="410"/>
        <end position="444"/>
    </location>
</feature>
<feature type="region of interest" description="Disordered" evidence="4">
    <location>
        <begin position="505"/>
        <end position="527"/>
    </location>
</feature>
<feature type="compositionally biased region" description="Acidic residues" evidence="4">
    <location>
        <begin position="111"/>
        <end position="125"/>
    </location>
</feature>
<feature type="compositionally biased region" description="Basic residues" evidence="4">
    <location>
        <begin position="384"/>
        <end position="393"/>
    </location>
</feature>
<feature type="compositionally biased region" description="Basic and acidic residues" evidence="4">
    <location>
        <begin position="511"/>
        <end position="527"/>
    </location>
</feature>
<evidence type="ECO:0000250" key="1"/>
<evidence type="ECO:0000255" key="2">
    <source>
        <dbReference type="PROSITE-ProRule" id="PRU00092"/>
    </source>
</evidence>
<evidence type="ECO:0000255" key="3">
    <source>
        <dbReference type="PROSITE-ProRule" id="PRU00723"/>
    </source>
</evidence>
<evidence type="ECO:0000256" key="4">
    <source>
        <dbReference type="SAM" id="MobiDB-lite"/>
    </source>
</evidence>
<protein>
    <recommendedName>
        <fullName>Zinc finger CCCH-type with G patch domain-containing protein</fullName>
    </recommendedName>
</protein>
<sequence>MDEGTLEAAITAYSAQLQQVESALLAGLDPSQQADLLKLKEDLSQLIELTEASLVSVKKSRLLATLEEDDGLQSLATGTPANGGLDNEFAAFYSEVGEVSGSSSDMREREDEREEEDDGEVEGEVDALSGTKVRAPYRTSWGTLEYHNAMIVGTESCDRNEAQVRVLYVHPTQKSMKPCPFFLEDKCRFADNCRFSHGEVVYVSELREFLESDLTNLQEGSSCLARQDDGIWYSGKITDIDNDFYTVKFDSALLKNVMVEADGVIPPLREDDLPSCSDSEDDDNGEGEAAFPRVLTQEEDWAPSRSSSAFGGWEAHTRGIGSKLMLKMGYEYGKGLGKTSEGRVEPVLAVVLPKGKSLDQCAELTARKTQRKVAKGKDGQQVSRNKRTRKARAHNTGGCHNVFDFLNRKLGNGDANPEAGGTCGPPPSHTPSSQGAGVEAYKGGKSTKRNLNVKLFQAAERVAQTEREIQRLTESLSRRTGRDSSMVTHLEEKLSAARSLLVQQKAQELSAQRENRKADTHKKMTEF</sequence>
<dbReference type="EMBL" id="BT059459">
    <property type="protein sequence ID" value="ACN11172.1"/>
    <property type="molecule type" value="mRNA"/>
</dbReference>
<dbReference type="RefSeq" id="NP_001167239.1">
    <property type="nucleotide sequence ID" value="NM_001173768.1"/>
</dbReference>
<dbReference type="SMR" id="C0HAV3"/>
<dbReference type="STRING" id="8030.ENSSSAP00000040697"/>
<dbReference type="PaxDb" id="8030-ENSSSAP00000040697"/>
<dbReference type="Ensembl" id="ENSSSAT00020116110">
    <property type="protein sequence ID" value="ENSSSAP00020086409"/>
    <property type="gene ID" value="ENSSSAG00020053372"/>
</dbReference>
<dbReference type="Ensembl" id="ENSSSAT00070061157">
    <property type="protein sequence ID" value="ENSSSAP00070058604"/>
    <property type="gene ID" value="ENSSSAG00070038102"/>
</dbReference>
<dbReference type="Ensembl" id="ENSSSAT00075053676">
    <property type="protein sequence ID" value="ENSSSAP00075037228"/>
    <property type="gene ID" value="ENSSSAG00075025811"/>
</dbReference>
<dbReference type="GeneID" id="100380483"/>
<dbReference type="KEGG" id="sasa:100380483"/>
<dbReference type="CTD" id="84619"/>
<dbReference type="OMA" id="QYTRGIG"/>
<dbReference type="OrthoDB" id="551049at7898"/>
<dbReference type="Proteomes" id="UP000087266">
    <property type="component" value="Chromosome ssa13"/>
</dbReference>
<dbReference type="Bgee" id="ENSSSAG00000044761">
    <property type="expression patterns" value="Expressed in fast muscle tissue and 25 other cell types or tissues"/>
</dbReference>
<dbReference type="GO" id="GO:0005634">
    <property type="term" value="C:nucleus"/>
    <property type="evidence" value="ECO:0000250"/>
    <property type="project" value="UniProtKB"/>
</dbReference>
<dbReference type="GO" id="GO:0003700">
    <property type="term" value="F:DNA-binding transcription factor activity"/>
    <property type="evidence" value="ECO:0000250"/>
    <property type="project" value="UniProtKB"/>
</dbReference>
<dbReference type="GO" id="GO:0001227">
    <property type="term" value="F:DNA-binding transcription repressor activity, RNA polymerase II-specific"/>
    <property type="evidence" value="ECO:0007669"/>
    <property type="project" value="TreeGrafter"/>
</dbReference>
<dbReference type="GO" id="GO:0000978">
    <property type="term" value="F:RNA polymerase II cis-regulatory region sequence-specific DNA binding"/>
    <property type="evidence" value="ECO:0007669"/>
    <property type="project" value="TreeGrafter"/>
</dbReference>
<dbReference type="GO" id="GO:0043565">
    <property type="term" value="F:sequence-specific DNA binding"/>
    <property type="evidence" value="ECO:0000250"/>
    <property type="project" value="UniProtKB"/>
</dbReference>
<dbReference type="GO" id="GO:0008270">
    <property type="term" value="F:zinc ion binding"/>
    <property type="evidence" value="ECO:0007669"/>
    <property type="project" value="UniProtKB-KW"/>
</dbReference>
<dbReference type="GO" id="GO:0045892">
    <property type="term" value="P:negative regulation of DNA-templated transcription"/>
    <property type="evidence" value="ECO:0000250"/>
    <property type="project" value="UniProtKB"/>
</dbReference>
<dbReference type="GO" id="GO:0007175">
    <property type="term" value="P:negative regulation of epidermal growth factor-activated receptor activity"/>
    <property type="evidence" value="ECO:0000250"/>
    <property type="project" value="UniProtKB"/>
</dbReference>
<dbReference type="CDD" id="cd20384">
    <property type="entry name" value="Tudor_ZGPAT"/>
    <property type="match status" value="1"/>
</dbReference>
<dbReference type="Gene3D" id="2.30.30.1190">
    <property type="match status" value="1"/>
</dbReference>
<dbReference type="Gene3D" id="2.30.30.140">
    <property type="match status" value="1"/>
</dbReference>
<dbReference type="InterPro" id="IPR000467">
    <property type="entry name" value="G_patch_dom"/>
</dbReference>
<dbReference type="InterPro" id="IPR041367">
    <property type="entry name" value="Znf-CCCH_4"/>
</dbReference>
<dbReference type="InterPro" id="IPR000571">
    <property type="entry name" value="Znf_CCCH"/>
</dbReference>
<dbReference type="PANTHER" id="PTHR46297">
    <property type="entry name" value="ZINC FINGER CCCH-TYPE WITH G PATCH DOMAIN-CONTAINING PROTEIN"/>
    <property type="match status" value="1"/>
</dbReference>
<dbReference type="PANTHER" id="PTHR46297:SF1">
    <property type="entry name" value="ZINC FINGER CCCH-TYPE WITH G PATCH DOMAIN-CONTAINING PROTEIN"/>
    <property type="match status" value="1"/>
</dbReference>
<dbReference type="Pfam" id="PF01585">
    <property type="entry name" value="G-patch"/>
    <property type="match status" value="1"/>
</dbReference>
<dbReference type="Pfam" id="PF18044">
    <property type="entry name" value="zf-CCCH_4"/>
    <property type="match status" value="1"/>
</dbReference>
<dbReference type="SMART" id="SM00443">
    <property type="entry name" value="G_patch"/>
    <property type="match status" value="1"/>
</dbReference>
<dbReference type="SMART" id="SM00356">
    <property type="entry name" value="ZnF_C3H1"/>
    <property type="match status" value="1"/>
</dbReference>
<dbReference type="PROSITE" id="PS50174">
    <property type="entry name" value="G_PATCH"/>
    <property type="match status" value="1"/>
</dbReference>
<dbReference type="PROSITE" id="PS50103">
    <property type="entry name" value="ZF_C3H1"/>
    <property type="match status" value="1"/>
</dbReference>
<name>ZGPAT_SALSA</name>
<gene>
    <name type="primary">zgpat</name>
</gene>
<comment type="function">
    <text evidence="1">Transcription repressor that specifically binds the 5'-GGAG[GA]A[GA]A-3' consensus sequence. Represses transcription by recruiting the chromatin multiprotein complex NuRD to target promoters. Negatively regulates expression of EGFR, a gene involved in cell proliferation, survival and migration (By similarity).</text>
</comment>
<comment type="subcellular location">
    <subcellularLocation>
        <location evidence="1">Nucleus</location>
    </subcellularLocation>
</comment>